<evidence type="ECO:0000255" key="1">
    <source>
        <dbReference type="HAMAP-Rule" id="MF_01320"/>
    </source>
</evidence>
<evidence type="ECO:0000256" key="2">
    <source>
        <dbReference type="SAM" id="MobiDB-lite"/>
    </source>
</evidence>
<evidence type="ECO:0000305" key="3"/>
<proteinExistence type="inferred from homology"/>
<sequence length="276" mass="30362">MAIKKYKPTTNGLRNMSVSSFAEITTQTPEKSLLVPYKNQAGRNNQGKITVRHRGGGVKRKYRLIDFKRNKDNIIGKVATIEYDPNRSANIALIFYADGEKRYILAPKGLTVGTSIVSGPNSDIKVGNCLPLLNIPVGTTVHNIELKPGKGGQIARSSGASAQIISREDKYVLLRLQSSEVRKVLGSCRATIGEIGNEFYKLINYGKAGKKRFLGIRPTVRGSAMNPNDHPHGGGEGRAPIGRKSPMTPWGKKARGIKTRDRKKSSNELIIRRRTK</sequence>
<dbReference type="EMBL" id="AM422018">
    <property type="protein sequence ID" value="CAM11918.1"/>
    <property type="molecule type" value="Genomic_DNA"/>
</dbReference>
<dbReference type="SMR" id="B1VAE5"/>
<dbReference type="STRING" id="59748.PA0584"/>
<dbReference type="KEGG" id="pal:PA0584"/>
<dbReference type="eggNOG" id="COG0090">
    <property type="taxonomic scope" value="Bacteria"/>
</dbReference>
<dbReference type="Proteomes" id="UP000008323">
    <property type="component" value="Chromosome"/>
</dbReference>
<dbReference type="GO" id="GO:0015934">
    <property type="term" value="C:large ribosomal subunit"/>
    <property type="evidence" value="ECO:0007669"/>
    <property type="project" value="InterPro"/>
</dbReference>
<dbReference type="GO" id="GO:0019843">
    <property type="term" value="F:rRNA binding"/>
    <property type="evidence" value="ECO:0007669"/>
    <property type="project" value="UniProtKB-UniRule"/>
</dbReference>
<dbReference type="GO" id="GO:0003735">
    <property type="term" value="F:structural constituent of ribosome"/>
    <property type="evidence" value="ECO:0007669"/>
    <property type="project" value="InterPro"/>
</dbReference>
<dbReference type="GO" id="GO:0016740">
    <property type="term" value="F:transferase activity"/>
    <property type="evidence" value="ECO:0007669"/>
    <property type="project" value="InterPro"/>
</dbReference>
<dbReference type="GO" id="GO:0002181">
    <property type="term" value="P:cytoplasmic translation"/>
    <property type="evidence" value="ECO:0007669"/>
    <property type="project" value="TreeGrafter"/>
</dbReference>
<dbReference type="FunFam" id="2.30.30.30:FF:000001">
    <property type="entry name" value="50S ribosomal protein L2"/>
    <property type="match status" value="1"/>
</dbReference>
<dbReference type="FunFam" id="2.40.50.140:FF:000003">
    <property type="entry name" value="50S ribosomal protein L2"/>
    <property type="match status" value="1"/>
</dbReference>
<dbReference type="FunFam" id="4.10.950.10:FF:000001">
    <property type="entry name" value="50S ribosomal protein L2"/>
    <property type="match status" value="1"/>
</dbReference>
<dbReference type="Gene3D" id="2.30.30.30">
    <property type="match status" value="1"/>
</dbReference>
<dbReference type="Gene3D" id="2.40.50.140">
    <property type="entry name" value="Nucleic acid-binding proteins"/>
    <property type="match status" value="1"/>
</dbReference>
<dbReference type="Gene3D" id="4.10.950.10">
    <property type="entry name" value="Ribosomal protein L2, domain 3"/>
    <property type="match status" value="1"/>
</dbReference>
<dbReference type="HAMAP" id="MF_01320_B">
    <property type="entry name" value="Ribosomal_uL2_B"/>
    <property type="match status" value="1"/>
</dbReference>
<dbReference type="InterPro" id="IPR012340">
    <property type="entry name" value="NA-bd_OB-fold"/>
</dbReference>
<dbReference type="InterPro" id="IPR014722">
    <property type="entry name" value="Rib_uL2_dom2"/>
</dbReference>
<dbReference type="InterPro" id="IPR002171">
    <property type="entry name" value="Ribosomal_uL2"/>
</dbReference>
<dbReference type="InterPro" id="IPR005880">
    <property type="entry name" value="Ribosomal_uL2_bac/org-type"/>
</dbReference>
<dbReference type="InterPro" id="IPR022669">
    <property type="entry name" value="Ribosomal_uL2_C"/>
</dbReference>
<dbReference type="InterPro" id="IPR022671">
    <property type="entry name" value="Ribosomal_uL2_CS"/>
</dbReference>
<dbReference type="InterPro" id="IPR014726">
    <property type="entry name" value="Ribosomal_uL2_dom3"/>
</dbReference>
<dbReference type="InterPro" id="IPR022666">
    <property type="entry name" value="Ribosomal_uL2_RNA-bd_dom"/>
</dbReference>
<dbReference type="InterPro" id="IPR008991">
    <property type="entry name" value="Translation_prot_SH3-like_sf"/>
</dbReference>
<dbReference type="NCBIfam" id="TIGR01171">
    <property type="entry name" value="rplB_bact"/>
    <property type="match status" value="1"/>
</dbReference>
<dbReference type="PANTHER" id="PTHR13691:SF5">
    <property type="entry name" value="LARGE RIBOSOMAL SUBUNIT PROTEIN UL2M"/>
    <property type="match status" value="1"/>
</dbReference>
<dbReference type="PANTHER" id="PTHR13691">
    <property type="entry name" value="RIBOSOMAL PROTEIN L2"/>
    <property type="match status" value="1"/>
</dbReference>
<dbReference type="Pfam" id="PF00181">
    <property type="entry name" value="Ribosomal_L2"/>
    <property type="match status" value="1"/>
</dbReference>
<dbReference type="Pfam" id="PF03947">
    <property type="entry name" value="Ribosomal_L2_C"/>
    <property type="match status" value="1"/>
</dbReference>
<dbReference type="PIRSF" id="PIRSF002158">
    <property type="entry name" value="Ribosomal_L2"/>
    <property type="match status" value="1"/>
</dbReference>
<dbReference type="SMART" id="SM01383">
    <property type="entry name" value="Ribosomal_L2"/>
    <property type="match status" value="1"/>
</dbReference>
<dbReference type="SMART" id="SM01382">
    <property type="entry name" value="Ribosomal_L2_C"/>
    <property type="match status" value="1"/>
</dbReference>
<dbReference type="SUPFAM" id="SSF50249">
    <property type="entry name" value="Nucleic acid-binding proteins"/>
    <property type="match status" value="1"/>
</dbReference>
<dbReference type="SUPFAM" id="SSF50104">
    <property type="entry name" value="Translation proteins SH3-like domain"/>
    <property type="match status" value="1"/>
</dbReference>
<dbReference type="PROSITE" id="PS00467">
    <property type="entry name" value="RIBOSOMAL_L2"/>
    <property type="match status" value="1"/>
</dbReference>
<keyword id="KW-1185">Reference proteome</keyword>
<keyword id="KW-0687">Ribonucleoprotein</keyword>
<keyword id="KW-0689">Ribosomal protein</keyword>
<keyword id="KW-0694">RNA-binding</keyword>
<keyword id="KW-0699">rRNA-binding</keyword>
<protein>
    <recommendedName>
        <fullName evidence="1">Large ribosomal subunit protein uL2</fullName>
    </recommendedName>
    <alternativeName>
        <fullName evidence="3">50S ribosomal protein L2</fullName>
    </alternativeName>
</protein>
<comment type="function">
    <text evidence="1">One of the primary rRNA binding proteins. Required for association of the 30S and 50S subunits to form the 70S ribosome, for tRNA binding and peptide bond formation. It has been suggested to have peptidyltransferase activity; this is somewhat controversial. Makes several contacts with the 16S rRNA in the 70S ribosome.</text>
</comment>
<comment type="subunit">
    <text evidence="1">Part of the 50S ribosomal subunit. Forms a bridge to the 30S subunit in the 70S ribosome.</text>
</comment>
<comment type="similarity">
    <text evidence="1">Belongs to the universal ribosomal protein uL2 family.</text>
</comment>
<reference key="1">
    <citation type="journal article" date="2008" name="J. Bacteriol.">
        <title>Comparative genome analysis of 'Candidatus Phytoplasma australiense' (subgroup tuf-Australia I; rp-A) and 'Ca. Phytoplasma asteris' strains OY-M and AY-WB.</title>
        <authorList>
            <person name="Tran-Nguyen L.T."/>
            <person name="Kube M."/>
            <person name="Schneider B."/>
            <person name="Reinhardt R."/>
            <person name="Gibb K.S."/>
        </authorList>
    </citation>
    <scope>NUCLEOTIDE SEQUENCE [LARGE SCALE GENOMIC DNA]</scope>
</reference>
<organism>
    <name type="scientific">Phytoplasma australiense</name>
    <dbReference type="NCBI Taxonomy" id="59748"/>
    <lineage>
        <taxon>Bacteria</taxon>
        <taxon>Bacillati</taxon>
        <taxon>Mycoplasmatota</taxon>
        <taxon>Mollicutes</taxon>
        <taxon>Acholeplasmatales</taxon>
        <taxon>Acholeplasmataceae</taxon>
        <taxon>Candidatus Phytoplasma</taxon>
        <taxon>16SrXII (Stolbur group)</taxon>
    </lineage>
</organism>
<name>RL2_PHYAS</name>
<accession>B1VAE5</accession>
<gene>
    <name evidence="1" type="primary">rplB</name>
    <name type="ordered locus">PA0584</name>
</gene>
<feature type="chain" id="PRO_1000141593" description="Large ribosomal subunit protein uL2">
    <location>
        <begin position="1"/>
        <end position="276"/>
    </location>
</feature>
<feature type="region of interest" description="Disordered" evidence="2">
    <location>
        <begin position="221"/>
        <end position="276"/>
    </location>
</feature>
<feature type="compositionally biased region" description="Basic residues" evidence="2">
    <location>
        <begin position="252"/>
        <end position="263"/>
    </location>
</feature>